<reference key="1">
    <citation type="journal article" date="1999" name="Nature">
        <title>Sequence and analysis of chromosome 4 of the plant Arabidopsis thaliana.</title>
        <authorList>
            <person name="Mayer K.F.X."/>
            <person name="Schueller C."/>
            <person name="Wambutt R."/>
            <person name="Murphy G."/>
            <person name="Volckaert G."/>
            <person name="Pohl T."/>
            <person name="Duesterhoeft A."/>
            <person name="Stiekema W."/>
            <person name="Entian K.-D."/>
            <person name="Terryn N."/>
            <person name="Harris B."/>
            <person name="Ansorge W."/>
            <person name="Brandt P."/>
            <person name="Grivell L.A."/>
            <person name="Rieger M."/>
            <person name="Weichselgartner M."/>
            <person name="de Simone V."/>
            <person name="Obermaier B."/>
            <person name="Mache R."/>
            <person name="Mueller M."/>
            <person name="Kreis M."/>
            <person name="Delseny M."/>
            <person name="Puigdomenech P."/>
            <person name="Watson M."/>
            <person name="Schmidtheini T."/>
            <person name="Reichert B."/>
            <person name="Portetelle D."/>
            <person name="Perez-Alonso M."/>
            <person name="Boutry M."/>
            <person name="Bancroft I."/>
            <person name="Vos P."/>
            <person name="Hoheisel J."/>
            <person name="Zimmermann W."/>
            <person name="Wedler H."/>
            <person name="Ridley P."/>
            <person name="Langham S.-A."/>
            <person name="McCullagh B."/>
            <person name="Bilham L."/>
            <person name="Robben J."/>
            <person name="van der Schueren J."/>
            <person name="Grymonprez B."/>
            <person name="Chuang Y.-J."/>
            <person name="Vandenbussche F."/>
            <person name="Braeken M."/>
            <person name="Weltjens I."/>
            <person name="Voet M."/>
            <person name="Bastiaens I."/>
            <person name="Aert R."/>
            <person name="Defoor E."/>
            <person name="Weitzenegger T."/>
            <person name="Bothe G."/>
            <person name="Ramsperger U."/>
            <person name="Hilbert H."/>
            <person name="Braun M."/>
            <person name="Holzer E."/>
            <person name="Brandt A."/>
            <person name="Peters S."/>
            <person name="van Staveren M."/>
            <person name="Dirkse W."/>
            <person name="Mooijman P."/>
            <person name="Klein Lankhorst R."/>
            <person name="Rose M."/>
            <person name="Hauf J."/>
            <person name="Koetter P."/>
            <person name="Berneiser S."/>
            <person name="Hempel S."/>
            <person name="Feldpausch M."/>
            <person name="Lamberth S."/>
            <person name="Van den Daele H."/>
            <person name="De Keyser A."/>
            <person name="Buysshaert C."/>
            <person name="Gielen J."/>
            <person name="Villarroel R."/>
            <person name="De Clercq R."/>
            <person name="van Montagu M."/>
            <person name="Rogers J."/>
            <person name="Cronin A."/>
            <person name="Quail M.A."/>
            <person name="Bray-Allen S."/>
            <person name="Clark L."/>
            <person name="Doggett J."/>
            <person name="Hall S."/>
            <person name="Kay M."/>
            <person name="Lennard N."/>
            <person name="McLay K."/>
            <person name="Mayes R."/>
            <person name="Pettett A."/>
            <person name="Rajandream M.A."/>
            <person name="Lyne M."/>
            <person name="Benes V."/>
            <person name="Rechmann S."/>
            <person name="Borkova D."/>
            <person name="Bloecker H."/>
            <person name="Scharfe M."/>
            <person name="Grimm M."/>
            <person name="Loehnert T.-H."/>
            <person name="Dose S."/>
            <person name="de Haan M."/>
            <person name="Maarse A.C."/>
            <person name="Schaefer M."/>
            <person name="Mueller-Auer S."/>
            <person name="Gabel C."/>
            <person name="Fuchs M."/>
            <person name="Fartmann B."/>
            <person name="Granderath K."/>
            <person name="Dauner D."/>
            <person name="Herzl A."/>
            <person name="Neumann S."/>
            <person name="Argiriou A."/>
            <person name="Vitale D."/>
            <person name="Liguori R."/>
            <person name="Piravandi E."/>
            <person name="Massenet O."/>
            <person name="Quigley F."/>
            <person name="Clabauld G."/>
            <person name="Muendlein A."/>
            <person name="Felber R."/>
            <person name="Schnabl S."/>
            <person name="Hiller R."/>
            <person name="Schmidt W."/>
            <person name="Lecharny A."/>
            <person name="Aubourg S."/>
            <person name="Chefdor F."/>
            <person name="Cooke R."/>
            <person name="Berger C."/>
            <person name="Monfort A."/>
            <person name="Casacuberta E."/>
            <person name="Gibbons T."/>
            <person name="Weber N."/>
            <person name="Vandenbol M."/>
            <person name="Bargues M."/>
            <person name="Terol J."/>
            <person name="Torres A."/>
            <person name="Perez-Perez A."/>
            <person name="Purnelle B."/>
            <person name="Bent E."/>
            <person name="Johnson S."/>
            <person name="Tacon D."/>
            <person name="Jesse T."/>
            <person name="Heijnen L."/>
            <person name="Schwarz S."/>
            <person name="Scholler P."/>
            <person name="Heber S."/>
            <person name="Francs P."/>
            <person name="Bielke C."/>
            <person name="Frishman D."/>
            <person name="Haase D."/>
            <person name="Lemcke K."/>
            <person name="Mewes H.-W."/>
            <person name="Stocker S."/>
            <person name="Zaccaria P."/>
            <person name="Bevan M."/>
            <person name="Wilson R.K."/>
            <person name="de la Bastide M."/>
            <person name="Habermann K."/>
            <person name="Parnell L."/>
            <person name="Dedhia N."/>
            <person name="Gnoj L."/>
            <person name="Schutz K."/>
            <person name="Huang E."/>
            <person name="Spiegel L."/>
            <person name="Sekhon M."/>
            <person name="Murray J."/>
            <person name="Sheet P."/>
            <person name="Cordes M."/>
            <person name="Abu-Threideh J."/>
            <person name="Stoneking T."/>
            <person name="Kalicki J."/>
            <person name="Graves T."/>
            <person name="Harmon G."/>
            <person name="Edwards J."/>
            <person name="Latreille P."/>
            <person name="Courtney L."/>
            <person name="Cloud J."/>
            <person name="Abbott A."/>
            <person name="Scott K."/>
            <person name="Johnson D."/>
            <person name="Minx P."/>
            <person name="Bentley D."/>
            <person name="Fulton B."/>
            <person name="Miller N."/>
            <person name="Greco T."/>
            <person name="Kemp K."/>
            <person name="Kramer J."/>
            <person name="Fulton L."/>
            <person name="Mardis E."/>
            <person name="Dante M."/>
            <person name="Pepin K."/>
            <person name="Hillier L.W."/>
            <person name="Nelson J."/>
            <person name="Spieth J."/>
            <person name="Ryan E."/>
            <person name="Andrews S."/>
            <person name="Geisel C."/>
            <person name="Layman D."/>
            <person name="Du H."/>
            <person name="Ali J."/>
            <person name="Berghoff A."/>
            <person name="Jones K."/>
            <person name="Drone K."/>
            <person name="Cotton M."/>
            <person name="Joshu C."/>
            <person name="Antonoiu B."/>
            <person name="Zidanic M."/>
            <person name="Strong C."/>
            <person name="Sun H."/>
            <person name="Lamar B."/>
            <person name="Yordan C."/>
            <person name="Ma P."/>
            <person name="Zhong J."/>
            <person name="Preston R."/>
            <person name="Vil D."/>
            <person name="Shekher M."/>
            <person name="Matero A."/>
            <person name="Shah R."/>
            <person name="Swaby I.K."/>
            <person name="O'Shaughnessy A."/>
            <person name="Rodriguez M."/>
            <person name="Hoffman J."/>
            <person name="Till S."/>
            <person name="Granat S."/>
            <person name="Shohdy N."/>
            <person name="Hasegawa A."/>
            <person name="Hameed A."/>
            <person name="Lodhi M."/>
            <person name="Johnson A."/>
            <person name="Chen E."/>
            <person name="Marra M.A."/>
            <person name="Martienssen R."/>
            <person name="McCombie W.R."/>
        </authorList>
    </citation>
    <scope>NUCLEOTIDE SEQUENCE [LARGE SCALE GENOMIC DNA]</scope>
    <source>
        <strain>cv. Columbia</strain>
    </source>
</reference>
<reference key="2">
    <citation type="journal article" date="2017" name="Plant J.">
        <title>Araport11: a complete reannotation of the Arabidopsis thaliana reference genome.</title>
        <authorList>
            <person name="Cheng C.Y."/>
            <person name="Krishnakumar V."/>
            <person name="Chan A.P."/>
            <person name="Thibaud-Nissen F."/>
            <person name="Schobel S."/>
            <person name="Town C.D."/>
        </authorList>
    </citation>
    <scope>GENOME REANNOTATION</scope>
    <source>
        <strain>cv. Columbia</strain>
    </source>
</reference>
<reference key="3">
    <citation type="journal article" date="2003" name="Science">
        <title>Empirical analysis of transcriptional activity in the Arabidopsis genome.</title>
        <authorList>
            <person name="Yamada K."/>
            <person name="Lim J."/>
            <person name="Dale J.M."/>
            <person name="Chen H."/>
            <person name="Shinn P."/>
            <person name="Palm C.J."/>
            <person name="Southwick A.M."/>
            <person name="Wu H.C."/>
            <person name="Kim C.J."/>
            <person name="Nguyen M."/>
            <person name="Pham P.K."/>
            <person name="Cheuk R.F."/>
            <person name="Karlin-Newmann G."/>
            <person name="Liu S.X."/>
            <person name="Lam B."/>
            <person name="Sakano H."/>
            <person name="Wu T."/>
            <person name="Yu G."/>
            <person name="Miranda M."/>
            <person name="Quach H.L."/>
            <person name="Tripp M."/>
            <person name="Chang C.H."/>
            <person name="Lee J.M."/>
            <person name="Toriumi M.J."/>
            <person name="Chan M.M."/>
            <person name="Tang C.C."/>
            <person name="Onodera C.S."/>
            <person name="Deng J.M."/>
            <person name="Akiyama K."/>
            <person name="Ansari Y."/>
            <person name="Arakawa T."/>
            <person name="Banh J."/>
            <person name="Banno F."/>
            <person name="Bowser L."/>
            <person name="Brooks S.Y."/>
            <person name="Carninci P."/>
            <person name="Chao Q."/>
            <person name="Choy N."/>
            <person name="Enju A."/>
            <person name="Goldsmith A.D."/>
            <person name="Gurjal M."/>
            <person name="Hansen N.F."/>
            <person name="Hayashizaki Y."/>
            <person name="Johnson-Hopson C."/>
            <person name="Hsuan V.W."/>
            <person name="Iida K."/>
            <person name="Karnes M."/>
            <person name="Khan S."/>
            <person name="Koesema E."/>
            <person name="Ishida J."/>
            <person name="Jiang P.X."/>
            <person name="Jones T."/>
            <person name="Kawai J."/>
            <person name="Kamiya A."/>
            <person name="Meyers C."/>
            <person name="Nakajima M."/>
            <person name="Narusaka M."/>
            <person name="Seki M."/>
            <person name="Sakurai T."/>
            <person name="Satou M."/>
            <person name="Tamse R."/>
            <person name="Vaysberg M."/>
            <person name="Wallender E.K."/>
            <person name="Wong C."/>
            <person name="Yamamura Y."/>
            <person name="Yuan S."/>
            <person name="Shinozaki K."/>
            <person name="Davis R.W."/>
            <person name="Theologis A."/>
            <person name="Ecker J.R."/>
        </authorList>
    </citation>
    <scope>NUCLEOTIDE SEQUENCE [LARGE SCALE MRNA]</scope>
    <source>
        <strain>cv. Columbia</strain>
    </source>
</reference>
<proteinExistence type="evidence at transcript level"/>
<evidence type="ECO:0000255" key="1">
    <source>
        <dbReference type="PROSITE-ProRule" id="PRU00267"/>
    </source>
</evidence>
<evidence type="ECO:0000256" key="2">
    <source>
        <dbReference type="SAM" id="MobiDB-lite"/>
    </source>
</evidence>
<feature type="chain" id="PRO_0000399932" description="High mobility group B protein 6">
    <location>
        <begin position="1"/>
        <end position="456"/>
    </location>
</feature>
<feature type="DNA-binding region" description="HMG box 1" evidence="1">
    <location>
        <begin position="138"/>
        <end position="206"/>
    </location>
</feature>
<feature type="DNA-binding region" description="HMG box 2" evidence="1">
    <location>
        <begin position="255"/>
        <end position="321"/>
    </location>
</feature>
<feature type="DNA-binding region" description="HMG box 3" evidence="1">
    <location>
        <begin position="379"/>
        <end position="447"/>
    </location>
</feature>
<feature type="region of interest" description="Disordered" evidence="2">
    <location>
        <begin position="1"/>
        <end position="42"/>
    </location>
</feature>
<feature type="region of interest" description="Disordered" evidence="2">
    <location>
        <begin position="117"/>
        <end position="142"/>
    </location>
</feature>
<feature type="region of interest" description="Disordered" evidence="2">
    <location>
        <begin position="238"/>
        <end position="258"/>
    </location>
</feature>
<feature type="region of interest" description="Disordered" evidence="2">
    <location>
        <begin position="349"/>
        <end position="389"/>
    </location>
</feature>
<feature type="compositionally biased region" description="Basic residues" evidence="2">
    <location>
        <begin position="11"/>
        <end position="21"/>
    </location>
</feature>
<feature type="compositionally biased region" description="Basic and acidic residues" evidence="2">
    <location>
        <begin position="240"/>
        <end position="254"/>
    </location>
</feature>
<feature type="compositionally biased region" description="Basic and acidic residues" evidence="2">
    <location>
        <begin position="354"/>
        <end position="363"/>
    </location>
</feature>
<gene>
    <name type="primary">HMGB6</name>
    <name type="synonym">NFD6</name>
    <name type="synonym">WRKY53</name>
    <name type="ordered locus">At4g23800</name>
    <name type="ORF">F9D16.270</name>
    <name type="ORF">T32A16.2</name>
</gene>
<keyword id="KW-0025">Alternative splicing</keyword>
<keyword id="KW-0238">DNA-binding</keyword>
<keyword id="KW-0539">Nucleus</keyword>
<keyword id="KW-1185">Reference proteome</keyword>
<keyword id="KW-0677">Repeat</keyword>
<sequence>MATNADPAPTKKPRNSRKALKQKNELVETPPSPVSVKGKSAKSFEQDLMEMQTMLEKMKIEKDKTEELLKEKDEILRKKEEELETRDAEQEKLKVELKKLQKMKEFKPNMTFACGQSSLTQAEQEKANKKKKKDCPETKRPSSSYVLWCKDQWTEVKKENPEADFKETSNILGAKWKSLSAEDKKPYEERYQVEKEAYLQVIAKEKREKEAMKLLEDDQKQRTAMELLDQYLNFVQEAEQDNKKKNKKEKDPLKPKHPVSAFLVYANERRAALREENKSVVEVAKITGEEWKNLSDKKKAPYEKVAKKNKETYLQAMEEYKRTKEEEALSQKKEEEELLKLHKQEALQMLKKKEKTDNLIKKEKATKKKKNENVDPNKPKKPASSYFLFSKDERKKLTEERPGTNNATVTALISLKWKELSEEEKQVYNGKAAKLMEAYKKEVEAYNKKSAATTSS</sequence>
<accession>Q9SUP7</accession>
<protein>
    <recommendedName>
        <fullName>High mobility group B protein 6</fullName>
    </recommendedName>
    <alternativeName>
        <fullName>Nucleosome/chromatin assembly factor group D 06</fullName>
        <shortName>Nucleosome/chromatin assembly factor group D 6</shortName>
    </alternativeName>
    <alternativeName>
        <fullName>WRKY transcription factor 53</fullName>
        <shortName>AtWRKY53</shortName>
        <shortName>WRKY DNA-binding protein 53</shortName>
    </alternativeName>
</protein>
<dbReference type="EMBL" id="AL035394">
    <property type="protein sequence ID" value="CAA23046.1"/>
    <property type="molecule type" value="Genomic_DNA"/>
</dbReference>
<dbReference type="EMBL" id="AL161560">
    <property type="protein sequence ID" value="CAB81298.1"/>
    <property type="molecule type" value="Genomic_DNA"/>
</dbReference>
<dbReference type="EMBL" id="CP002687">
    <property type="protein sequence ID" value="AEE84807.1"/>
    <property type="molecule type" value="Genomic_DNA"/>
</dbReference>
<dbReference type="EMBL" id="AY074353">
    <property type="protein sequence ID" value="AAL67049.1"/>
    <property type="molecule type" value="mRNA"/>
</dbReference>
<dbReference type="EMBL" id="AY096398">
    <property type="protein sequence ID" value="AAM20038.1"/>
    <property type="molecule type" value="mRNA"/>
</dbReference>
<dbReference type="EMBL" id="AY125491">
    <property type="protein sequence ID" value="AAM83212.1"/>
    <property type="molecule type" value="mRNA"/>
</dbReference>
<dbReference type="PIR" id="T05612">
    <property type="entry name" value="T05612"/>
</dbReference>
<dbReference type="RefSeq" id="NP_194111.1">
    <molecule id="Q9SUP7-1"/>
    <property type="nucleotide sequence ID" value="NM_118511.3"/>
</dbReference>
<dbReference type="SMR" id="Q9SUP7"/>
<dbReference type="FunCoup" id="Q9SUP7">
    <property type="interactions" value="230"/>
</dbReference>
<dbReference type="STRING" id="3702.Q9SUP7"/>
<dbReference type="iPTMnet" id="Q9SUP7"/>
<dbReference type="PaxDb" id="3702-AT4G23800.1"/>
<dbReference type="ProteomicsDB" id="228805">
    <molecule id="Q9SUP7-1"/>
</dbReference>
<dbReference type="EnsemblPlants" id="AT4G23800.1">
    <molecule id="Q9SUP7-1"/>
    <property type="protein sequence ID" value="AT4G23800.1"/>
    <property type="gene ID" value="AT4G23800"/>
</dbReference>
<dbReference type="Gramene" id="AT4G23800.1">
    <molecule id="Q9SUP7-1"/>
    <property type="protein sequence ID" value="AT4G23800.1"/>
    <property type="gene ID" value="AT4G23800"/>
</dbReference>
<dbReference type="KEGG" id="ath:AT4G23800"/>
<dbReference type="Araport" id="AT4G23800"/>
<dbReference type="TAIR" id="AT4G23800">
    <property type="gene designation" value="3XHMG-BOX2"/>
</dbReference>
<dbReference type="eggNOG" id="KOG0381">
    <property type="taxonomic scope" value="Eukaryota"/>
</dbReference>
<dbReference type="InParanoid" id="Q9SUP7"/>
<dbReference type="OMA" id="CKEQRDE"/>
<dbReference type="PhylomeDB" id="Q9SUP7"/>
<dbReference type="PRO" id="PR:Q9SUP7"/>
<dbReference type="Proteomes" id="UP000006548">
    <property type="component" value="Chromosome 4"/>
</dbReference>
<dbReference type="ExpressionAtlas" id="Q9SUP7">
    <property type="expression patterns" value="baseline and differential"/>
</dbReference>
<dbReference type="GO" id="GO:0005634">
    <property type="term" value="C:nucleus"/>
    <property type="evidence" value="ECO:0007669"/>
    <property type="project" value="UniProtKB-SubCell"/>
</dbReference>
<dbReference type="GO" id="GO:0003677">
    <property type="term" value="F:DNA binding"/>
    <property type="evidence" value="ECO:0000314"/>
    <property type="project" value="TAIR"/>
</dbReference>
<dbReference type="GO" id="GO:0003700">
    <property type="term" value="F:DNA-binding transcription factor activity"/>
    <property type="evidence" value="ECO:0000250"/>
    <property type="project" value="TAIR"/>
</dbReference>
<dbReference type="CDD" id="cd22006">
    <property type="entry name" value="HMG-box_AtHMGB6-like_rpt1"/>
    <property type="match status" value="1"/>
</dbReference>
<dbReference type="CDD" id="cd22007">
    <property type="entry name" value="HMG-box_AtHMGB6-like_rpt2"/>
    <property type="match status" value="1"/>
</dbReference>
<dbReference type="CDD" id="cd22008">
    <property type="entry name" value="HMG-box_AtHMGB6-like_rpt3"/>
    <property type="match status" value="1"/>
</dbReference>
<dbReference type="FunFam" id="1.10.30.10:FF:000083">
    <property type="entry name" value="High mobility group B protein 13"/>
    <property type="match status" value="1"/>
</dbReference>
<dbReference type="FunFam" id="1.10.30.10:FF:000092">
    <property type="entry name" value="High mobility group B protein 13"/>
    <property type="match status" value="1"/>
</dbReference>
<dbReference type="Gene3D" id="1.10.30.10">
    <property type="entry name" value="High mobility group box domain"/>
    <property type="match status" value="3"/>
</dbReference>
<dbReference type="InterPro" id="IPR009071">
    <property type="entry name" value="HMG_box_dom"/>
</dbReference>
<dbReference type="InterPro" id="IPR036910">
    <property type="entry name" value="HMG_box_dom_sf"/>
</dbReference>
<dbReference type="InterPro" id="IPR044601">
    <property type="entry name" value="HMGB6/HMGB13"/>
</dbReference>
<dbReference type="PANTHER" id="PTHR46912">
    <property type="entry name" value="HIGH MOBILITY GROUP B PROTEIN 13"/>
    <property type="match status" value="1"/>
</dbReference>
<dbReference type="PANTHER" id="PTHR46912:SF2">
    <property type="entry name" value="HIGH MOBILITY GROUP B PROTEIN 6"/>
    <property type="match status" value="1"/>
</dbReference>
<dbReference type="Pfam" id="PF00505">
    <property type="entry name" value="HMG_box"/>
    <property type="match status" value="3"/>
</dbReference>
<dbReference type="SMART" id="SM00398">
    <property type="entry name" value="HMG"/>
    <property type="match status" value="3"/>
</dbReference>
<dbReference type="SUPFAM" id="SSF47095">
    <property type="entry name" value="HMG-box"/>
    <property type="match status" value="3"/>
</dbReference>
<dbReference type="PROSITE" id="PS50118">
    <property type="entry name" value="HMG_BOX_2"/>
    <property type="match status" value="3"/>
</dbReference>
<comment type="subcellular location">
    <subcellularLocation>
        <location evidence="1">Nucleus</location>
    </subcellularLocation>
</comment>
<comment type="alternative products">
    <event type="alternative splicing"/>
    <isoform>
        <id>Q9SUP7-1</id>
        <name>1</name>
        <sequence type="displayed"/>
    </isoform>
    <text>A number of isoforms are produced. According to EST sequences.</text>
</comment>
<name>HMGB6_ARATH</name>
<organism>
    <name type="scientific">Arabidopsis thaliana</name>
    <name type="common">Mouse-ear cress</name>
    <dbReference type="NCBI Taxonomy" id="3702"/>
    <lineage>
        <taxon>Eukaryota</taxon>
        <taxon>Viridiplantae</taxon>
        <taxon>Streptophyta</taxon>
        <taxon>Embryophyta</taxon>
        <taxon>Tracheophyta</taxon>
        <taxon>Spermatophyta</taxon>
        <taxon>Magnoliopsida</taxon>
        <taxon>eudicotyledons</taxon>
        <taxon>Gunneridae</taxon>
        <taxon>Pentapetalae</taxon>
        <taxon>rosids</taxon>
        <taxon>malvids</taxon>
        <taxon>Brassicales</taxon>
        <taxon>Brassicaceae</taxon>
        <taxon>Camelineae</taxon>
        <taxon>Arabidopsis</taxon>
    </lineage>
</organism>